<comment type="catalytic activity">
    <reaction>
        <text>alpha-D-galactose 1-phosphate + UDP-alpha-D-glucose = alpha-D-glucose 1-phosphate + UDP-alpha-D-galactose</text>
        <dbReference type="Rhea" id="RHEA:13989"/>
        <dbReference type="ChEBI" id="CHEBI:58336"/>
        <dbReference type="ChEBI" id="CHEBI:58601"/>
        <dbReference type="ChEBI" id="CHEBI:58885"/>
        <dbReference type="ChEBI" id="CHEBI:66914"/>
        <dbReference type="EC" id="2.7.7.12"/>
    </reaction>
</comment>
<comment type="pathway">
    <text>Carbohydrate metabolism; galactose metabolism.</text>
</comment>
<comment type="subcellular location">
    <subcellularLocation>
        <location evidence="1">Cytoplasm</location>
    </subcellularLocation>
</comment>
<comment type="similarity">
    <text evidence="1">Belongs to the galactose-1-phosphate uridylyltransferase type 2 family.</text>
</comment>
<evidence type="ECO:0000305" key="1"/>
<accession>Q9CE63</accession>
<accession>O87522</accession>
<dbReference type="EC" id="2.7.7.12"/>
<dbReference type="EMBL" id="AF082008">
    <property type="protein sequence ID" value="AAC63018.1"/>
    <property type="molecule type" value="Genomic_DNA"/>
</dbReference>
<dbReference type="EMBL" id="U60828">
    <property type="protein sequence ID" value="AAD11511.1"/>
    <property type="molecule type" value="Genomic_DNA"/>
</dbReference>
<dbReference type="EMBL" id="AE005176">
    <property type="protein sequence ID" value="AAK06080.1"/>
    <property type="molecule type" value="Genomic_DNA"/>
</dbReference>
<dbReference type="PIR" id="F86872">
    <property type="entry name" value="F86872"/>
</dbReference>
<dbReference type="RefSeq" id="NP_268139.1">
    <property type="nucleotide sequence ID" value="NC_002662.1"/>
</dbReference>
<dbReference type="RefSeq" id="WP_010906248.1">
    <property type="nucleotide sequence ID" value="NC_002662.1"/>
</dbReference>
<dbReference type="PaxDb" id="272623-L0027"/>
<dbReference type="EnsemblBacteria" id="AAK06080">
    <property type="protein sequence ID" value="AAK06080"/>
    <property type="gene ID" value="L0027"/>
</dbReference>
<dbReference type="KEGG" id="lla:L0027"/>
<dbReference type="PATRIC" id="fig|272623.7.peg.2135"/>
<dbReference type="eggNOG" id="COG4468">
    <property type="taxonomic scope" value="Bacteria"/>
</dbReference>
<dbReference type="HOGENOM" id="CLU_047799_0_0_9"/>
<dbReference type="OrthoDB" id="2293at2"/>
<dbReference type="UniPathway" id="UPA00214"/>
<dbReference type="Proteomes" id="UP000002196">
    <property type="component" value="Chromosome"/>
</dbReference>
<dbReference type="GO" id="GO:0005737">
    <property type="term" value="C:cytoplasm"/>
    <property type="evidence" value="ECO:0007669"/>
    <property type="project" value="UniProtKB-SubCell"/>
</dbReference>
<dbReference type="GO" id="GO:0008108">
    <property type="term" value="F:UDP-glucose:hexose-1-phosphate uridylyltransferase activity"/>
    <property type="evidence" value="ECO:0007669"/>
    <property type="project" value="UniProtKB-UniRule"/>
</dbReference>
<dbReference type="GO" id="GO:0006012">
    <property type="term" value="P:galactose metabolic process"/>
    <property type="evidence" value="ECO:0007669"/>
    <property type="project" value="UniProtKB-UniRule"/>
</dbReference>
<dbReference type="HAMAP" id="MF_00571">
    <property type="entry name" value="GalP_UDP_trans"/>
    <property type="match status" value="1"/>
</dbReference>
<dbReference type="InterPro" id="IPR000766">
    <property type="entry name" value="GalP_uridyl_Trfase_II"/>
</dbReference>
<dbReference type="InterPro" id="IPR023425">
    <property type="entry name" value="GalP_uridyl_Trfase_II_CS"/>
</dbReference>
<dbReference type="InterPro" id="IPR005850">
    <property type="entry name" value="GalP_Utransf_C"/>
</dbReference>
<dbReference type="InterPro" id="IPR005849">
    <property type="entry name" value="GalP_Utransf_N"/>
</dbReference>
<dbReference type="NCBIfam" id="TIGR01239">
    <property type="entry name" value="galT_2"/>
    <property type="match status" value="1"/>
</dbReference>
<dbReference type="NCBIfam" id="NF003629">
    <property type="entry name" value="PRK05270.1-2"/>
    <property type="match status" value="1"/>
</dbReference>
<dbReference type="NCBIfam" id="NF003633">
    <property type="entry name" value="PRK05270.2-2"/>
    <property type="match status" value="1"/>
</dbReference>
<dbReference type="NCBIfam" id="NF003634">
    <property type="entry name" value="PRK05270.2-3"/>
    <property type="match status" value="1"/>
</dbReference>
<dbReference type="PANTHER" id="PTHR39191:SF1">
    <property type="entry name" value="DUF4922 DOMAIN-CONTAINING PROTEIN"/>
    <property type="match status" value="1"/>
</dbReference>
<dbReference type="PANTHER" id="PTHR39191">
    <property type="entry name" value="GALACTOSE-1-PHOSPHATE URIDYLYLTRANSFERASE"/>
    <property type="match status" value="1"/>
</dbReference>
<dbReference type="Pfam" id="PF02744">
    <property type="entry name" value="GalP_UDP_tr_C"/>
    <property type="match status" value="1"/>
</dbReference>
<dbReference type="Pfam" id="PF01087">
    <property type="entry name" value="GalP_UDP_transf"/>
    <property type="match status" value="1"/>
</dbReference>
<dbReference type="PIRSF" id="PIRSF006005">
    <property type="entry name" value="GalT_BS"/>
    <property type="match status" value="1"/>
</dbReference>
<dbReference type="PROSITE" id="PS01163">
    <property type="entry name" value="GAL_P_UDP_TRANSF_II"/>
    <property type="match status" value="1"/>
</dbReference>
<protein>
    <recommendedName>
        <fullName>Galactose-1-phosphate uridylyltransferase</fullName>
        <shortName>Gal-1-P uridylyltransferase</shortName>
        <ecNumber>2.7.7.12</ecNumber>
    </recommendedName>
    <alternativeName>
        <fullName>UDP-glucose--hexose-1-phosphate uridylyltransferase</fullName>
    </alternativeName>
</protein>
<gene>
    <name type="primary">galT</name>
    <name type="ordered locus">LL1982</name>
    <name type="ORF">L0027</name>
</gene>
<organism>
    <name type="scientific">Lactococcus lactis subsp. lactis (strain IL1403)</name>
    <name type="common">Streptococcus lactis</name>
    <dbReference type="NCBI Taxonomy" id="272623"/>
    <lineage>
        <taxon>Bacteria</taxon>
        <taxon>Bacillati</taxon>
        <taxon>Bacillota</taxon>
        <taxon>Bacilli</taxon>
        <taxon>Lactobacillales</taxon>
        <taxon>Streptococcaceae</taxon>
        <taxon>Lactococcus</taxon>
    </lineage>
</organism>
<proteinExistence type="inferred from homology"/>
<name>GALT_LACLA</name>
<reference key="1">
    <citation type="journal article" date="1998" name="J. Bacteriol.">
        <title>Transcriptional regulation and evolution of lactose genes in the galactose-lactose operon of Lactococcus lactis NCDO2054.</title>
        <authorList>
            <person name="Vaughan E.E."/>
            <person name="Pridmore R.D."/>
            <person name="Mollet B."/>
        </authorList>
    </citation>
    <scope>NUCLEOTIDE SEQUENCE [GENOMIC DNA]</scope>
    <source>
        <strain>NCDO 2054</strain>
    </source>
</reference>
<reference key="2">
    <citation type="submission" date="1999-02" db="EMBL/GenBank/DDBJ databases">
        <title>The organization of genes involved in metabolism of gal/lac of Lactococcus lactis.</title>
        <authorList>
            <person name="Lee J.M."/>
            <person name="Chung D.K."/>
            <person name="Park J.H."/>
            <person name="Lee W.K."/>
            <person name="Chang H.C."/>
            <person name="Kim J.H."/>
            <person name="Lee H.J."/>
        </authorList>
    </citation>
    <scope>NUCLEOTIDE SEQUENCE [GENOMIC DNA]</scope>
    <source>
        <strain>ATCC 7962</strain>
    </source>
</reference>
<reference key="3">
    <citation type="journal article" date="2001" name="Genome Res.">
        <title>The complete genome sequence of the lactic acid bacterium Lactococcus lactis ssp. lactis IL1403.</title>
        <authorList>
            <person name="Bolotin A."/>
            <person name="Wincker P."/>
            <person name="Mauger S."/>
            <person name="Jaillon O."/>
            <person name="Malarme K."/>
            <person name="Weissenbach J."/>
            <person name="Ehrlich S.D."/>
            <person name="Sorokin A."/>
        </authorList>
    </citation>
    <scope>NUCLEOTIDE SEQUENCE [LARGE SCALE GENOMIC DNA]</scope>
    <source>
        <strain>IL1403</strain>
    </source>
</reference>
<keyword id="KW-0119">Carbohydrate metabolism</keyword>
<keyword id="KW-0963">Cytoplasm</keyword>
<keyword id="KW-0299">Galactose metabolism</keyword>
<keyword id="KW-0548">Nucleotidyltransferase</keyword>
<keyword id="KW-1185">Reference proteome</keyword>
<keyword id="KW-0808">Transferase</keyword>
<feature type="chain" id="PRO_0000169908" description="Galactose-1-phosphate uridylyltransferase">
    <location>
        <begin position="1"/>
        <end position="493"/>
    </location>
</feature>
<feature type="sequence variant" description="In strain: ATCC 7962 and NCDO 2054.">
    <original>Q</original>
    <variation>H</variation>
    <location>
        <position position="95"/>
    </location>
</feature>
<feature type="sequence variant" description="In strain: ATCC 7962 and NCDO 2054.">
    <original>T</original>
    <variation>A</variation>
    <location>
        <position position="128"/>
    </location>
</feature>
<feature type="sequence variant" description="In strain: ATCC 7962 and NCDO 2054.">
    <original>K</original>
    <variation>R</variation>
    <location>
        <position position="435"/>
    </location>
</feature>
<sequence length="493" mass="56555">MSIYQSIQDFISLALQNGTIEPLDELYHRNQLLHFLGLNDWAEVDKEAHEKDSLILMDQLLAIANENNVIEKGQDEFYEAALMNFITPRPSKINQDFWEKYKTSPDAATQYFYELAQQVNQVKTRDITRNIAFSHLTKYGKLEITINLSKPEKDPKAIAAAKLVKASSYPACQLCLENEGFYGIGNKPARSNHRIIQVSINGEDWGFQYSPYAYFNEHSILLNAKHQPMEINKRAFDNLLGFLDQFPDYMIGSNADLPIVGGSILTHDHYQAGRYEFPMAKAELREEIKLQQFPEVSCGIVNWPMSVLRLSSKNQVELSKAADELLKKWQVYSDESLQIKAKSADGKLHHTITPIARIREGKYELDLVLRDNNTSEIYPDGIFHPHPALHHIKKENIGLIEVMGLAILPARLKTELLEVEKYLLNQENEMSEIHKPWAEELKETEYFSKETVHETVQEAVGEVFEQVLKDAGVFKDNEVGQKGFYEFINFVNN</sequence>